<gene>
    <name type="primary">cspA</name>
    <name type="ordered locus">SAOUHSC_01403</name>
</gene>
<name>CSPA_STAA8</name>
<accession>Q2FYN2</accession>
<accession>Q9L534</accession>
<proteinExistence type="evidence at protein level"/>
<feature type="chain" id="PRO_0000262539" description="Cold shock protein CspA">
    <location>
        <begin position="1"/>
        <end position="66"/>
    </location>
</feature>
<feature type="domain" description="CSD">
    <location>
        <begin position="1"/>
        <end position="66"/>
    </location>
</feature>
<dbReference type="EMBL" id="AF259960">
    <property type="protein sequence ID" value="AAF72664.1"/>
    <property type="molecule type" value="Genomic_DNA"/>
</dbReference>
<dbReference type="EMBL" id="CP000253">
    <property type="protein sequence ID" value="ABD30497.1"/>
    <property type="molecule type" value="Genomic_DNA"/>
</dbReference>
<dbReference type="RefSeq" id="WP_000809131.1">
    <property type="nucleotide sequence ID" value="NZ_LS483365.1"/>
</dbReference>
<dbReference type="RefSeq" id="YP_499930.1">
    <property type="nucleotide sequence ID" value="NC_007795.1"/>
</dbReference>
<dbReference type="SMR" id="Q2FYN2"/>
<dbReference type="STRING" id="93061.SAOUHSC_01403"/>
<dbReference type="PaxDb" id="1280-SAXN108_1419"/>
<dbReference type="GeneID" id="3920693"/>
<dbReference type="GeneID" id="98345769"/>
<dbReference type="KEGG" id="sao:SAOUHSC_01403"/>
<dbReference type="PATRIC" id="fig|93061.5.peg.1284"/>
<dbReference type="eggNOG" id="COG1278">
    <property type="taxonomic scope" value="Bacteria"/>
</dbReference>
<dbReference type="HOGENOM" id="CLU_117621_6_1_9"/>
<dbReference type="OrthoDB" id="9805039at2"/>
<dbReference type="Proteomes" id="UP000008816">
    <property type="component" value="Chromosome"/>
</dbReference>
<dbReference type="GO" id="GO:0005737">
    <property type="term" value="C:cytoplasm"/>
    <property type="evidence" value="ECO:0007669"/>
    <property type="project" value="UniProtKB-SubCell"/>
</dbReference>
<dbReference type="GO" id="GO:0003676">
    <property type="term" value="F:nucleic acid binding"/>
    <property type="evidence" value="ECO:0000318"/>
    <property type="project" value="GO_Central"/>
</dbReference>
<dbReference type="GO" id="GO:0010468">
    <property type="term" value="P:regulation of gene expression"/>
    <property type="evidence" value="ECO:0000318"/>
    <property type="project" value="GO_Central"/>
</dbReference>
<dbReference type="CDD" id="cd04458">
    <property type="entry name" value="CSP_CDS"/>
    <property type="match status" value="1"/>
</dbReference>
<dbReference type="FunFam" id="2.40.50.140:FF:000006">
    <property type="entry name" value="Cold shock protein CspC"/>
    <property type="match status" value="1"/>
</dbReference>
<dbReference type="Gene3D" id="6.20.370.130">
    <property type="match status" value="1"/>
</dbReference>
<dbReference type="Gene3D" id="2.40.50.140">
    <property type="entry name" value="Nucleic acid-binding proteins"/>
    <property type="match status" value="1"/>
</dbReference>
<dbReference type="InterPro" id="IPR012156">
    <property type="entry name" value="Cold_shock_CspA"/>
</dbReference>
<dbReference type="InterPro" id="IPR050181">
    <property type="entry name" value="Cold_shock_domain"/>
</dbReference>
<dbReference type="InterPro" id="IPR011129">
    <property type="entry name" value="CSD"/>
</dbReference>
<dbReference type="InterPro" id="IPR019844">
    <property type="entry name" value="CSD_CS"/>
</dbReference>
<dbReference type="InterPro" id="IPR002059">
    <property type="entry name" value="CSP_DNA-bd"/>
</dbReference>
<dbReference type="InterPro" id="IPR012340">
    <property type="entry name" value="NA-bd_OB-fold"/>
</dbReference>
<dbReference type="PANTHER" id="PTHR11544">
    <property type="entry name" value="COLD SHOCK DOMAIN CONTAINING PROTEINS"/>
    <property type="match status" value="1"/>
</dbReference>
<dbReference type="Pfam" id="PF00313">
    <property type="entry name" value="CSD"/>
    <property type="match status" value="1"/>
</dbReference>
<dbReference type="PIRSF" id="PIRSF002599">
    <property type="entry name" value="Cold_shock_A"/>
    <property type="match status" value="1"/>
</dbReference>
<dbReference type="PRINTS" id="PR00050">
    <property type="entry name" value="COLDSHOCK"/>
</dbReference>
<dbReference type="SMART" id="SM00357">
    <property type="entry name" value="CSP"/>
    <property type="match status" value="1"/>
</dbReference>
<dbReference type="SUPFAM" id="SSF50249">
    <property type="entry name" value="Nucleic acid-binding proteins"/>
    <property type="match status" value="1"/>
</dbReference>
<dbReference type="PROSITE" id="PS00352">
    <property type="entry name" value="CSD_1"/>
    <property type="match status" value="1"/>
</dbReference>
<dbReference type="PROSITE" id="PS51857">
    <property type="entry name" value="CSD_2"/>
    <property type="match status" value="1"/>
</dbReference>
<sequence length="66" mass="7321">MKQGTVKWFNAEKGFGFIEVEGENDVFVHFSAINQDGYKSLEEGQAVEFEVVEGDRGPQAANVVKL</sequence>
<organism>
    <name type="scientific">Staphylococcus aureus (strain NCTC 8325 / PS 47)</name>
    <dbReference type="NCBI Taxonomy" id="93061"/>
    <lineage>
        <taxon>Bacteria</taxon>
        <taxon>Bacillati</taxon>
        <taxon>Bacillota</taxon>
        <taxon>Bacilli</taxon>
        <taxon>Bacillales</taxon>
        <taxon>Staphylococcaceae</taxon>
        <taxon>Staphylococcus</taxon>
    </lineage>
</organism>
<comment type="function">
    <text evidence="2 3">Involved in cold stress response and in the susceptibility to an antimicrobial peptide of human cathepsin G (CG117-136). Regulates yellowish-orange pigment production through a still unclear SigB-dependent mechanism.</text>
</comment>
<comment type="subcellular location">
    <subcellularLocation>
        <location evidence="1">Cytoplasm</location>
    </subcellularLocation>
</comment>
<comment type="induction">
    <text>Up-regulated in response to low temperature.</text>
</comment>
<keyword id="KW-0963">Cytoplasm</keyword>
<keyword id="KW-1185">Reference proteome</keyword>
<protein>
    <recommendedName>
        <fullName>Cold shock protein CspA</fullName>
    </recommendedName>
</protein>
<evidence type="ECO:0000250" key="1"/>
<evidence type="ECO:0000269" key="2">
    <source>
    </source>
</evidence>
<evidence type="ECO:0000269" key="3">
    <source>
    </source>
</evidence>
<reference key="1">
    <citation type="journal article" date="2003" name="Infect. Immun.">
        <title>The major cold shock gene, cspA, is involved in the susceptibility of Staphylococcus aureus to an antimicrobial peptide of human cathepsin G.</title>
        <authorList>
            <person name="Katzif S."/>
            <person name="Danavall D."/>
            <person name="Bowers S."/>
            <person name="Balthazar J.T."/>
            <person name="Shafer W.M."/>
        </authorList>
    </citation>
    <scope>NUCLEOTIDE SEQUENCE [GENOMIC DNA]</scope>
    <scope>FUNCTION IN COLD STRESS RESPONSE</scope>
    <scope>SUSCEPTIBILITY TO ANTIMICROBIAL PEPTIDE</scope>
</reference>
<reference key="2">
    <citation type="book" date="2006" name="Gram positive pathogens, 2nd edition">
        <title>The Staphylococcus aureus NCTC 8325 genome.</title>
        <editorList>
            <person name="Fischetti V."/>
            <person name="Novick R."/>
            <person name="Ferretti J."/>
            <person name="Portnoy D."/>
            <person name="Rood J."/>
        </editorList>
        <authorList>
            <person name="Gillaspy A.F."/>
            <person name="Worrell V."/>
            <person name="Orvis J."/>
            <person name="Roe B.A."/>
            <person name="Dyer D.W."/>
            <person name="Iandolo J.J."/>
        </authorList>
    </citation>
    <scope>NUCLEOTIDE SEQUENCE [LARGE SCALE GENOMIC DNA]</scope>
    <source>
        <strain>NCTC 8325 / PS 47</strain>
    </source>
</reference>
<reference key="3">
    <citation type="journal article" date="2005" name="J. Bacteriol.">
        <title>CspA regulates pigment production in Staphylococcus aureus through a SigB-dependent mechanism.</title>
        <authorList>
            <person name="Katzif S."/>
            <person name="Lee E.-H."/>
            <person name="Law A.B."/>
            <person name="Tzeng Y.-L."/>
            <person name="Shafer W.M."/>
        </authorList>
    </citation>
    <scope>FUNCTION IN PIGMENT PRODUCTION</scope>
</reference>